<dbReference type="EMBL" id="U54644">
    <property type="protein sequence ID" value="AAB53494.1"/>
    <property type="molecule type" value="mRNA"/>
</dbReference>
<dbReference type="EMBL" id="U82467">
    <property type="protein sequence ID" value="AAB53699.1"/>
    <property type="molecule type" value="mRNA"/>
</dbReference>
<dbReference type="EMBL" id="CH471064">
    <property type="protein sequence ID" value="EAW68634.1"/>
    <property type="molecule type" value="Genomic_DNA"/>
</dbReference>
<dbReference type="EMBL" id="BC075031">
    <property type="protein sequence ID" value="AAH75031.1"/>
    <property type="molecule type" value="mRNA"/>
</dbReference>
<dbReference type="EMBL" id="BC075032">
    <property type="protein sequence ID" value="AAH75032.1"/>
    <property type="molecule type" value="mRNA"/>
</dbReference>
<dbReference type="CCDS" id="CCDS7786.1">
    <molecule id="P50607-2"/>
</dbReference>
<dbReference type="CCDS" id="CCDS7787.1">
    <molecule id="P50607-1"/>
</dbReference>
<dbReference type="RefSeq" id="NP_003311.2">
    <molecule id="P50607-2"/>
    <property type="nucleotide sequence ID" value="NM_003320.4"/>
</dbReference>
<dbReference type="RefSeq" id="NP_813977.1">
    <molecule id="P50607-1"/>
    <property type="nucleotide sequence ID" value="NM_177972.3"/>
</dbReference>
<dbReference type="PDB" id="1S31">
    <property type="method" value="X-ray"/>
    <property type="resolution" value="2.70 A"/>
    <property type="chains" value="A=234-506"/>
</dbReference>
<dbReference type="PDBsum" id="1S31"/>
<dbReference type="SMR" id="P50607"/>
<dbReference type="BioGRID" id="113126">
    <property type="interactions" value="26"/>
</dbReference>
<dbReference type="FunCoup" id="P50607">
    <property type="interactions" value="882"/>
</dbReference>
<dbReference type="IntAct" id="P50607">
    <property type="interactions" value="19"/>
</dbReference>
<dbReference type="MINT" id="P50607"/>
<dbReference type="STRING" id="9606.ENSP00000305426"/>
<dbReference type="DrugBank" id="DB02028">
    <property type="generic name" value="(1R,2R,3S,4R,6S)-3,4,6-Trihydroxy-5-{[(S)-hydroxy(3-hydroxy-2-oxopropoxy)phosphoryl]oxy}-1,2-cyclohexanediyl bis[dihydrogen (phosphate)]"/>
</dbReference>
<dbReference type="GlyGen" id="P50607">
    <property type="glycosylation" value="2 sites, 1 O-linked glycan (1 site)"/>
</dbReference>
<dbReference type="iPTMnet" id="P50607"/>
<dbReference type="PhosphoSitePlus" id="P50607"/>
<dbReference type="BioMuta" id="TUB"/>
<dbReference type="DMDM" id="1717821"/>
<dbReference type="jPOST" id="P50607"/>
<dbReference type="MassIVE" id="P50607"/>
<dbReference type="PaxDb" id="9606-ENSP00000305426"/>
<dbReference type="PeptideAtlas" id="P50607"/>
<dbReference type="ProteomicsDB" id="56256">
    <molecule id="P50607-1"/>
</dbReference>
<dbReference type="ProteomicsDB" id="56257">
    <molecule id="P50607-2"/>
</dbReference>
<dbReference type="Pumba" id="P50607"/>
<dbReference type="Antibodypedia" id="11439">
    <property type="antibodies" value="90 antibodies from 26 providers"/>
</dbReference>
<dbReference type="DNASU" id="7275"/>
<dbReference type="Ensembl" id="ENST00000299506.3">
    <molecule id="P50607-1"/>
    <property type="protein sequence ID" value="ENSP00000299506.3"/>
    <property type="gene ID" value="ENSG00000166402.9"/>
</dbReference>
<dbReference type="Ensembl" id="ENST00000305253.8">
    <molecule id="P50607-2"/>
    <property type="protein sequence ID" value="ENSP00000305426.4"/>
    <property type="gene ID" value="ENSG00000166402.9"/>
</dbReference>
<dbReference type="GeneID" id="7275"/>
<dbReference type="KEGG" id="hsa:7275"/>
<dbReference type="MANE-Select" id="ENST00000299506.3">
    <property type="protein sequence ID" value="ENSP00000299506.3"/>
    <property type="RefSeq nucleotide sequence ID" value="NM_177972.3"/>
    <property type="RefSeq protein sequence ID" value="NP_813977.1"/>
</dbReference>
<dbReference type="UCSC" id="uc001mfy.4">
    <molecule id="P50607-1"/>
    <property type="organism name" value="human"/>
</dbReference>
<dbReference type="AGR" id="HGNC:12406"/>
<dbReference type="CTD" id="7275"/>
<dbReference type="DisGeNET" id="7275"/>
<dbReference type="GeneCards" id="TUB"/>
<dbReference type="HGNC" id="HGNC:12406">
    <property type="gene designation" value="TUB"/>
</dbReference>
<dbReference type="HPA" id="ENSG00000166402">
    <property type="expression patterns" value="Tissue enhanced (retina)"/>
</dbReference>
<dbReference type="MalaCards" id="TUB"/>
<dbReference type="MIM" id="601197">
    <property type="type" value="gene"/>
</dbReference>
<dbReference type="MIM" id="616188">
    <property type="type" value="phenotype"/>
</dbReference>
<dbReference type="neXtProt" id="NX_P50607"/>
<dbReference type="OpenTargets" id="ENSG00000166402"/>
<dbReference type="Orphanet" id="791">
    <property type="disease" value="Retinitis pigmentosa"/>
</dbReference>
<dbReference type="PharmGKB" id="PA37070"/>
<dbReference type="VEuPathDB" id="HostDB:ENSG00000166402"/>
<dbReference type="eggNOG" id="KOG2502">
    <property type="taxonomic scope" value="Eukaryota"/>
</dbReference>
<dbReference type="GeneTree" id="ENSGT00940000158372"/>
<dbReference type="HOGENOM" id="CLU_028236_1_1_1"/>
<dbReference type="InParanoid" id="P50607"/>
<dbReference type="OMA" id="NGFYRLN"/>
<dbReference type="OrthoDB" id="8775810at2759"/>
<dbReference type="PAN-GO" id="P50607">
    <property type="GO annotations" value="2 GO annotations based on evolutionary models"/>
</dbReference>
<dbReference type="PhylomeDB" id="P50607"/>
<dbReference type="TreeFam" id="TF314076"/>
<dbReference type="PathwayCommons" id="P50607"/>
<dbReference type="SignaLink" id="P50607"/>
<dbReference type="BioGRID-ORCS" id="7275">
    <property type="hits" value="18 hits in 1178 CRISPR screens"/>
</dbReference>
<dbReference type="ChiTaRS" id="TUB">
    <property type="organism name" value="human"/>
</dbReference>
<dbReference type="EvolutionaryTrace" id="P50607"/>
<dbReference type="GeneWiki" id="TUB_(gene)"/>
<dbReference type="GenomeRNAi" id="7275"/>
<dbReference type="Pharos" id="P50607">
    <property type="development level" value="Tbio"/>
</dbReference>
<dbReference type="PRO" id="PR:P50607"/>
<dbReference type="Proteomes" id="UP000005640">
    <property type="component" value="Chromosome 11"/>
</dbReference>
<dbReference type="RNAct" id="P50607">
    <property type="molecule type" value="protein"/>
</dbReference>
<dbReference type="Bgee" id="ENSG00000166402">
    <property type="expression patterns" value="Expressed in substantia nigra pars reticulata and 165 other cell types or tissues"/>
</dbReference>
<dbReference type="ExpressionAtlas" id="P50607">
    <property type="expression patterns" value="baseline and differential"/>
</dbReference>
<dbReference type="GO" id="GO:0005929">
    <property type="term" value="C:cilium"/>
    <property type="evidence" value="ECO:0000314"/>
    <property type="project" value="MGI"/>
</dbReference>
<dbReference type="GO" id="GO:0005737">
    <property type="term" value="C:cytoplasm"/>
    <property type="evidence" value="ECO:0000314"/>
    <property type="project" value="MGI"/>
</dbReference>
<dbReference type="GO" id="GO:0005829">
    <property type="term" value="C:cytosol"/>
    <property type="evidence" value="ECO:0007669"/>
    <property type="project" value="Ensembl"/>
</dbReference>
<dbReference type="GO" id="GO:0005576">
    <property type="term" value="C:extracellular region"/>
    <property type="evidence" value="ECO:0007669"/>
    <property type="project" value="UniProtKB-SubCell"/>
</dbReference>
<dbReference type="GO" id="GO:0005634">
    <property type="term" value="C:nucleus"/>
    <property type="evidence" value="ECO:0000314"/>
    <property type="project" value="MGI"/>
</dbReference>
<dbReference type="GO" id="GO:0005886">
    <property type="term" value="C:plasma membrane"/>
    <property type="evidence" value="ECO:0007669"/>
    <property type="project" value="UniProtKB-SubCell"/>
</dbReference>
<dbReference type="GO" id="GO:0001664">
    <property type="term" value="F:G protein-coupled receptor binding"/>
    <property type="evidence" value="ECO:0000314"/>
    <property type="project" value="MGI"/>
</dbReference>
<dbReference type="GO" id="GO:0120160">
    <property type="term" value="F:intraciliary transport particle A binding"/>
    <property type="evidence" value="ECO:0000314"/>
    <property type="project" value="MGI"/>
</dbReference>
<dbReference type="GO" id="GO:0044877">
    <property type="term" value="F:protein-containing complex binding"/>
    <property type="evidence" value="ECO:0000314"/>
    <property type="project" value="MGI"/>
</dbReference>
<dbReference type="GO" id="GO:0042073">
    <property type="term" value="P:intraciliary transport"/>
    <property type="evidence" value="ECO:0000314"/>
    <property type="project" value="MGI"/>
</dbReference>
<dbReference type="GO" id="GO:0006910">
    <property type="term" value="P:phagocytosis, recognition"/>
    <property type="evidence" value="ECO:0007669"/>
    <property type="project" value="Ensembl"/>
</dbReference>
<dbReference type="GO" id="GO:0045494">
    <property type="term" value="P:photoreceptor cell maintenance"/>
    <property type="evidence" value="ECO:0007669"/>
    <property type="project" value="Ensembl"/>
</dbReference>
<dbReference type="GO" id="GO:0050766">
    <property type="term" value="P:positive regulation of phagocytosis"/>
    <property type="evidence" value="ECO:0000314"/>
    <property type="project" value="UniProtKB"/>
</dbReference>
<dbReference type="GO" id="GO:0061512">
    <property type="term" value="P:protein localization to cilium"/>
    <property type="evidence" value="ECO:0000318"/>
    <property type="project" value="GO_Central"/>
</dbReference>
<dbReference type="GO" id="GO:1903546">
    <property type="term" value="P:protein localization to photoreceptor outer segment"/>
    <property type="evidence" value="ECO:0007669"/>
    <property type="project" value="Ensembl"/>
</dbReference>
<dbReference type="GO" id="GO:0097500">
    <property type="term" value="P:receptor localization to non-motile cilium"/>
    <property type="evidence" value="ECO:0007669"/>
    <property type="project" value="Ensembl"/>
</dbReference>
<dbReference type="GO" id="GO:0008277">
    <property type="term" value="P:regulation of G protein-coupled receptor signaling pathway"/>
    <property type="evidence" value="ECO:0007669"/>
    <property type="project" value="Ensembl"/>
</dbReference>
<dbReference type="GO" id="GO:0060041">
    <property type="term" value="P:retina development in camera-type eye"/>
    <property type="evidence" value="ECO:0007669"/>
    <property type="project" value="Ensembl"/>
</dbReference>
<dbReference type="GO" id="GO:0007605">
    <property type="term" value="P:sensory perception of sound"/>
    <property type="evidence" value="ECO:0007669"/>
    <property type="project" value="Ensembl"/>
</dbReference>
<dbReference type="FunFam" id="3.20.90.10:FF:000001">
    <property type="entry name" value="Tubby-like protein"/>
    <property type="match status" value="1"/>
</dbReference>
<dbReference type="Gene3D" id="3.20.90.10">
    <property type="entry name" value="Tubby Protein, Chain A"/>
    <property type="match status" value="1"/>
</dbReference>
<dbReference type="InterPro" id="IPR025659">
    <property type="entry name" value="Tubby-like_C"/>
</dbReference>
<dbReference type="InterPro" id="IPR000007">
    <property type="entry name" value="Tubby_C"/>
</dbReference>
<dbReference type="InterPro" id="IPR018066">
    <property type="entry name" value="Tubby_C_CS"/>
</dbReference>
<dbReference type="InterPro" id="IPR005398">
    <property type="entry name" value="Tubby_N"/>
</dbReference>
<dbReference type="PANTHER" id="PTHR16517:SF20">
    <property type="entry name" value="TUBBY PROTEIN HOMOLOG"/>
    <property type="match status" value="1"/>
</dbReference>
<dbReference type="PANTHER" id="PTHR16517">
    <property type="entry name" value="TUBBY-RELATED"/>
    <property type="match status" value="1"/>
</dbReference>
<dbReference type="Pfam" id="PF01167">
    <property type="entry name" value="Tub"/>
    <property type="match status" value="1"/>
</dbReference>
<dbReference type="Pfam" id="PF16322">
    <property type="entry name" value="Tub_N"/>
    <property type="match status" value="1"/>
</dbReference>
<dbReference type="PRINTS" id="PR01573">
    <property type="entry name" value="SUPERTUBBY"/>
</dbReference>
<dbReference type="PRINTS" id="PR01574">
    <property type="entry name" value="TUBBYPROTEIN"/>
</dbReference>
<dbReference type="SUPFAM" id="SSF54518">
    <property type="entry name" value="Tubby C-terminal domain-like"/>
    <property type="match status" value="1"/>
</dbReference>
<dbReference type="PROSITE" id="PS01200">
    <property type="entry name" value="TUB_1"/>
    <property type="match status" value="1"/>
</dbReference>
<dbReference type="PROSITE" id="PS01201">
    <property type="entry name" value="TUB_2"/>
    <property type="match status" value="1"/>
</dbReference>
<keyword id="KW-0002">3D-structure</keyword>
<keyword id="KW-0025">Alternative splicing</keyword>
<keyword id="KW-1003">Cell membrane</keyword>
<keyword id="KW-0963">Cytoplasm</keyword>
<keyword id="KW-0472">Membrane</keyword>
<keyword id="KW-0539">Nucleus</keyword>
<keyword id="KW-0550">Obesity</keyword>
<keyword id="KW-0581">Phagocytosis</keyword>
<keyword id="KW-1267">Proteomics identification</keyword>
<keyword id="KW-1185">Reference proteome</keyword>
<keyword id="KW-0964">Secreted</keyword>
<keyword id="KW-0716">Sensory transduction</keyword>
<reference key="1">
    <citation type="journal article" date="1996" name="Cell">
        <title>Identification and characterization of the mouse obesity gene tubby: a member of a novel gene family.</title>
        <authorList>
            <person name="Kleyn P.W."/>
            <person name="Fan W."/>
            <person name="Kovats S.G."/>
            <person name="Lee J.L."/>
            <person name="Pulido J.C."/>
            <person name="Wu Y."/>
            <person name="Berkemeier L.R."/>
            <person name="Misumi D.J."/>
            <person name="Holmgren L."/>
            <person name="Charlat O."/>
            <person name="Woolf E.A."/>
            <person name="Tayber O."/>
            <person name="Brody T."/>
            <person name="Shu P."/>
            <person name="Hawkins F."/>
            <person name="Kennedy B."/>
            <person name="Baldini L."/>
            <person name="Ebeling C."/>
            <person name="Alperin G.D."/>
            <person name="Deeds J."/>
            <person name="Lakey N.D."/>
            <person name="Culpepper J."/>
            <person name="Chen H."/>
            <person name="Gluecksmann-Kuis M.A."/>
            <person name="Carlson G.A."/>
            <person name="Duyk G.M."/>
            <person name="Moore K.J."/>
        </authorList>
    </citation>
    <scope>NUCLEOTIDE SEQUENCE [MRNA] (ISOFORM 1)</scope>
</reference>
<reference key="2">
    <citation type="journal article" date="1997" name="Proc. Natl. Acad. Sci. U.S.A.">
        <title>Molecular characterization of TUB, TULP1, and TULP2, members of the novel tubby gene family and their possible relation to ocular diseases.</title>
        <authorList>
            <person name="North M.A."/>
            <person name="Naggert J.K."/>
            <person name="Yan Y."/>
            <person name="Noben-Trauth K."/>
            <person name="Nishina P.M."/>
        </authorList>
    </citation>
    <scope>NUCLEOTIDE SEQUENCE [MRNA] (ISOFORM 2)</scope>
    <source>
        <tissue>Brain</tissue>
    </source>
</reference>
<reference key="3">
    <citation type="submission" date="2005-09" db="EMBL/GenBank/DDBJ databases">
        <authorList>
            <person name="Mural R.J."/>
            <person name="Istrail S."/>
            <person name="Sutton G.G."/>
            <person name="Florea L."/>
            <person name="Halpern A.L."/>
            <person name="Mobarry C.M."/>
            <person name="Lippert R."/>
            <person name="Walenz B."/>
            <person name="Shatkay H."/>
            <person name="Dew I."/>
            <person name="Miller J.R."/>
            <person name="Flanigan M.J."/>
            <person name="Edwards N.J."/>
            <person name="Bolanos R."/>
            <person name="Fasulo D."/>
            <person name="Halldorsson B.V."/>
            <person name="Hannenhalli S."/>
            <person name="Turner R."/>
            <person name="Yooseph S."/>
            <person name="Lu F."/>
            <person name="Nusskern D.R."/>
            <person name="Shue B.C."/>
            <person name="Zheng X.H."/>
            <person name="Zhong F."/>
            <person name="Delcher A.L."/>
            <person name="Huson D.H."/>
            <person name="Kravitz S.A."/>
            <person name="Mouchard L."/>
            <person name="Reinert K."/>
            <person name="Remington K.A."/>
            <person name="Clark A.G."/>
            <person name="Waterman M.S."/>
            <person name="Eichler E.E."/>
            <person name="Adams M.D."/>
            <person name="Hunkapiller M.W."/>
            <person name="Myers E.W."/>
            <person name="Venter J.C."/>
        </authorList>
    </citation>
    <scope>NUCLEOTIDE SEQUENCE [LARGE SCALE GENOMIC DNA]</scope>
</reference>
<reference key="4">
    <citation type="journal article" date="2004" name="Genome Res.">
        <title>The status, quality, and expansion of the NIH full-length cDNA project: the Mammalian Gene Collection (MGC).</title>
        <authorList>
            <consortium name="The MGC Project Team"/>
        </authorList>
    </citation>
    <scope>NUCLEOTIDE SEQUENCE [LARGE SCALE MRNA] (ISOFORM 2)</scope>
    <source>
        <tissue>Fetal brain</tissue>
    </source>
</reference>
<reference key="5">
    <citation type="journal article" date="2010" name="Exp. Cell Res.">
        <title>Identification of tubby and tubby-like protein 1 as eat-me signals by phage display.</title>
        <authorList>
            <person name="Caberoy N.B."/>
            <person name="Maiguel D."/>
            <person name="Kim Y."/>
            <person name="Li W."/>
        </authorList>
    </citation>
    <scope>FUNCTION</scope>
</reference>
<reference key="6">
    <citation type="journal article" date="2014" name="Hum. Mutat.">
        <title>A homozygous mutation in the TUB gene associated with retinal dystrophy and obesity.</title>
        <authorList>
            <person name="Borman A.D."/>
            <person name="Pearce L.R."/>
            <person name="Mackay D.S."/>
            <person name="Nagel-Wolfrum K."/>
            <person name="Davidson A.E."/>
            <person name="Henderson R."/>
            <person name="Garg S."/>
            <person name="Waseem N.H."/>
            <person name="Webster A.R."/>
            <person name="Plagnol V."/>
            <person name="Wolfrum U."/>
            <person name="Farooqi I.S."/>
            <person name="Moore A.T."/>
        </authorList>
    </citation>
    <scope>INVOLVEMENT IN RDOB</scope>
</reference>
<reference key="7">
    <citation type="submission" date="2009-02" db="PDB data bank">
        <title>A novel human obesity and sensory deficit syndrome resulting from a mutation in the TUB gene.</title>
        <authorList>
            <person name="Boutboul S."/>
            <person name="Carroll K.J."/>
            <person name="Basdevant A."/>
            <person name="Gomez C."/>
            <person name="Nandrot E."/>
            <person name="Clement K."/>
            <person name="Shapiro L."/>
            <person name="Abitbol M."/>
        </authorList>
    </citation>
    <scope>X-RAY CRYSTALLOGRAPHY (2.7 ANGSTROMS) OF 234-506</scope>
</reference>
<organism>
    <name type="scientific">Homo sapiens</name>
    <name type="common">Human</name>
    <dbReference type="NCBI Taxonomy" id="9606"/>
    <lineage>
        <taxon>Eukaryota</taxon>
        <taxon>Metazoa</taxon>
        <taxon>Chordata</taxon>
        <taxon>Craniata</taxon>
        <taxon>Vertebrata</taxon>
        <taxon>Euteleostomi</taxon>
        <taxon>Mammalia</taxon>
        <taxon>Eutheria</taxon>
        <taxon>Euarchontoglires</taxon>
        <taxon>Primates</taxon>
        <taxon>Haplorrhini</taxon>
        <taxon>Catarrhini</taxon>
        <taxon>Hominidae</taxon>
        <taxon>Homo</taxon>
    </lineage>
</organism>
<comment type="function">
    <text evidence="1 3">Functions in signal transduction from heterotrimeric G protein-coupled receptors. Binds to membranes containing phosphatidylinositol 4,5-bisphosphate. Can bind DNA (in vitro). May contribute to the regulation of transcription in the nucleus. Could be involved in the hypothalamic regulation of body weight (By similarity). Contribute to stimulation of phagocytosis of apoptotic retinal pigment epithelium (RPE) cells and macrophages.</text>
</comment>
<comment type="subunit">
    <text evidence="1">Interacts with GNAQ. Interacts with TULP1.</text>
</comment>
<comment type="subcellular location">
    <subcellularLocation>
        <location evidence="1">Cytoplasm</location>
    </subcellularLocation>
    <subcellularLocation>
        <location evidence="1">Nucleus</location>
    </subcellularLocation>
    <subcellularLocation>
        <location evidence="1">Secreted</location>
    </subcellularLocation>
    <subcellularLocation>
        <location evidence="1">Cell membrane</location>
        <topology evidence="1">Peripheral membrane protein</topology>
        <orientation evidence="1">Cytoplasmic side</orientation>
    </subcellularLocation>
    <text evidence="1">Binds phospholipid and is anchored to the plasma membrane through binding phosphatidylinositol 4,5-bisphosphate. Is released upon activation of phospholipase C. Translocates from the plasma membrane to the nucleus upon activation of guanine nucleotide-binding protein G(q) subunit alpha. Does not have a cleavable signal peptide and is secreted by a non-conventional pathway (By similarity).</text>
</comment>
<comment type="alternative products">
    <event type="alternative splicing"/>
    <isoform>
        <id>P50607-1</id>
        <name>1</name>
        <sequence type="displayed"/>
    </isoform>
    <isoform>
        <id>P50607-2</id>
        <name>2</name>
        <sequence type="described" ref="VSP_023030"/>
    </isoform>
</comment>
<comment type="disease" evidence="4">
    <disease id="DI-04298">
        <name>Retinal dystrophy and obesity</name>
        <acronym>RDOB</acronym>
        <description>A disease characterized by obesity, night blindness, decreased visual acuity, and electrophysiological features of a rod cone dystrophy.</description>
        <dbReference type="MIM" id="616188"/>
    </disease>
    <text>The disease is caused by variants affecting the gene represented in this entry.</text>
</comment>
<comment type="similarity">
    <text evidence="7">Belongs to the TUB family.</text>
</comment>
<feature type="chain" id="PRO_0000186463" description="Tubby protein homolog">
    <location>
        <begin position="1"/>
        <end position="506"/>
    </location>
</feature>
<feature type="region of interest" description="Disordered" evidence="2">
    <location>
        <begin position="36"/>
        <end position="244"/>
    </location>
</feature>
<feature type="compositionally biased region" description="Low complexity" evidence="2">
    <location>
        <begin position="70"/>
        <end position="87"/>
    </location>
</feature>
<feature type="compositionally biased region" description="Low complexity" evidence="2">
    <location>
        <begin position="101"/>
        <end position="116"/>
    </location>
</feature>
<feature type="compositionally biased region" description="Acidic residues" evidence="2">
    <location>
        <begin position="196"/>
        <end position="206"/>
    </location>
</feature>
<feature type="compositionally biased region" description="Low complexity" evidence="2">
    <location>
        <begin position="207"/>
        <end position="221"/>
    </location>
</feature>
<feature type="compositionally biased region" description="Low complexity" evidence="2">
    <location>
        <begin position="230"/>
        <end position="243"/>
    </location>
</feature>
<feature type="splice variant" id="VSP_023030" description="In isoform 2." evidence="5 6">
    <original>MTSKPHSDWIPYS</original>
    <variation>MGARTPLPSFWVSFFAETGILFPGGTPWPMGSQHSKQHRKPGPLKRGHRRDRRTTRRKYWKEGREIAR</variation>
    <location>
        <begin position="1"/>
        <end position="13"/>
    </location>
</feature>
<feature type="helix" evidence="8">
    <location>
        <begin position="251"/>
        <end position="255"/>
    </location>
</feature>
<feature type="strand" evidence="8">
    <location>
        <begin position="265"/>
        <end position="272"/>
    </location>
</feature>
<feature type="helix" evidence="8">
    <location>
        <begin position="276"/>
        <end position="278"/>
    </location>
</feature>
<feature type="strand" evidence="8">
    <location>
        <begin position="283"/>
        <end position="289"/>
    </location>
</feature>
<feature type="strand" evidence="8">
    <location>
        <begin position="295"/>
        <end position="303"/>
    </location>
</feature>
<feature type="strand" evidence="8">
    <location>
        <begin position="311"/>
        <end position="316"/>
    </location>
</feature>
<feature type="helix" evidence="8">
    <location>
        <begin position="318"/>
        <end position="322"/>
    </location>
</feature>
<feature type="strand" evidence="8">
    <location>
        <begin position="329"/>
        <end position="334"/>
    </location>
</feature>
<feature type="strand" evidence="8">
    <location>
        <begin position="338"/>
        <end position="348"/>
    </location>
</feature>
<feature type="turn" evidence="8">
    <location>
        <begin position="355"/>
        <end position="357"/>
    </location>
</feature>
<feature type="strand" evidence="8">
    <location>
        <begin position="358"/>
        <end position="363"/>
    </location>
</feature>
<feature type="strand" evidence="8">
    <location>
        <begin position="366"/>
        <end position="372"/>
    </location>
</feature>
<feature type="strand" evidence="8">
    <location>
        <begin position="385"/>
        <end position="390"/>
    </location>
</feature>
<feature type="helix" evidence="8">
    <location>
        <begin position="406"/>
        <end position="408"/>
    </location>
</feature>
<feature type="helix" evidence="8">
    <location>
        <begin position="410"/>
        <end position="415"/>
    </location>
</feature>
<feature type="strand" evidence="8">
    <location>
        <begin position="421"/>
        <end position="427"/>
    </location>
</feature>
<feature type="strand" evidence="8">
    <location>
        <begin position="431"/>
        <end position="433"/>
    </location>
</feature>
<feature type="turn" evidence="8">
    <location>
        <begin position="434"/>
        <end position="437"/>
    </location>
</feature>
<feature type="strand" evidence="8">
    <location>
        <begin position="438"/>
        <end position="440"/>
    </location>
</feature>
<feature type="strand" evidence="8">
    <location>
        <begin position="455"/>
        <end position="459"/>
    </location>
</feature>
<feature type="strand" evidence="8">
    <location>
        <begin position="467"/>
        <end position="474"/>
    </location>
</feature>
<feature type="strand" evidence="8">
    <location>
        <begin position="477"/>
        <end position="482"/>
    </location>
</feature>
<feature type="helix" evidence="8">
    <location>
        <begin position="488"/>
        <end position="500"/>
    </location>
</feature>
<proteinExistence type="evidence at protein level"/>
<evidence type="ECO:0000250" key="1"/>
<evidence type="ECO:0000256" key="2">
    <source>
        <dbReference type="SAM" id="MobiDB-lite"/>
    </source>
</evidence>
<evidence type="ECO:0000269" key="3">
    <source>
    </source>
</evidence>
<evidence type="ECO:0000269" key="4">
    <source>
    </source>
</evidence>
<evidence type="ECO:0000303" key="5">
    <source>
    </source>
</evidence>
<evidence type="ECO:0000303" key="6">
    <source>
    </source>
</evidence>
<evidence type="ECO:0000305" key="7"/>
<evidence type="ECO:0007829" key="8">
    <source>
        <dbReference type="PDB" id="1S31"/>
    </source>
</evidence>
<accession>P50607</accession>
<accession>D3DQU4</accession>
<accession>O00293</accession>
<accession>Q6B007</accession>
<gene>
    <name type="primary">TUB</name>
</gene>
<protein>
    <recommendedName>
        <fullName>Tubby protein homolog</fullName>
    </recommendedName>
</protein>
<name>TUB_HUMAN</name>
<sequence>MTSKPHSDWIPYSVLDDEGRNLRQQKLDRQRALLEQKQKKKRQEPLMVQANADGRPRSRRARQSEEQAPLVESYLSSSGSTSYQVQEADSLASVQLGATRPTAPASAKRTKAAATAGGQGGAARKEKKGKHKGTSGPAALAEDKSEAQGPVQILTVGQSDHAQDAGETAAGGGERPSGQDLRATMQRKGISSSMSFDEDEEDEEENSSSSSQLNSNTRPSSATSRKSVREAASAPSPTAPEQPVDVEVQDLEEFALRPAPQGITIKCRITRDKKGMDRGMYPTYFLHLDREDGKKVFLLAGRKRKKSKTSNYLISVDPTDLSRGGDSYIGKLRSNLMGTKFTVYDNGVNPQKASSSTLESGTLRQELAAVCYETNVLGFKGPRKMSVIVPGMNMVHERVSIRPRNEHETLLARWQNKNTESIIELQNKTPVWNDDTQSYVLNFHGRVTQASVKNFQIIHGNDPDYIVMQFGRVAEDVFTMDYNYPLCALQAFAIALSSFDSKLACE</sequence>